<gene>
    <name evidence="1" type="primary">pepT</name>
    <name type="ordered locus">BWG_0975</name>
</gene>
<evidence type="ECO:0000255" key="1">
    <source>
        <dbReference type="HAMAP-Rule" id="MF_00550"/>
    </source>
</evidence>
<name>PEPT_ECOBW</name>
<reference key="1">
    <citation type="journal article" date="2009" name="J. Bacteriol.">
        <title>Genomic sequencing reveals regulatory mutations and recombinational events in the widely used MC4100 lineage of Escherichia coli K-12.</title>
        <authorList>
            <person name="Ferenci T."/>
            <person name="Zhou Z."/>
            <person name="Betteridge T."/>
            <person name="Ren Y."/>
            <person name="Liu Y."/>
            <person name="Feng L."/>
            <person name="Reeves P.R."/>
            <person name="Wang L."/>
        </authorList>
    </citation>
    <scope>NUCLEOTIDE SEQUENCE [LARGE SCALE GENOMIC DNA]</scope>
    <source>
        <strain>K12 / MC4100 / BW2952</strain>
    </source>
</reference>
<organism>
    <name type="scientific">Escherichia coli (strain K12 / MC4100 / BW2952)</name>
    <dbReference type="NCBI Taxonomy" id="595496"/>
    <lineage>
        <taxon>Bacteria</taxon>
        <taxon>Pseudomonadati</taxon>
        <taxon>Pseudomonadota</taxon>
        <taxon>Gammaproteobacteria</taxon>
        <taxon>Enterobacterales</taxon>
        <taxon>Enterobacteriaceae</taxon>
        <taxon>Escherichia</taxon>
    </lineage>
</organism>
<comment type="function">
    <text evidence="1">Cleaves the N-terminal amino acid of tripeptides.</text>
</comment>
<comment type="catalytic activity">
    <reaction evidence="1">
        <text>Release of the N-terminal residue from a tripeptide.</text>
        <dbReference type="EC" id="3.4.11.4"/>
    </reaction>
</comment>
<comment type="cofactor">
    <cofactor evidence="1">
        <name>Zn(2+)</name>
        <dbReference type="ChEBI" id="CHEBI:29105"/>
    </cofactor>
    <text evidence="1">Binds 2 Zn(2+) ions per subunit.</text>
</comment>
<comment type="subcellular location">
    <subcellularLocation>
        <location evidence="1">Cytoplasm</location>
    </subcellularLocation>
</comment>
<comment type="similarity">
    <text evidence="1">Belongs to the peptidase M20B family.</text>
</comment>
<keyword id="KW-0031">Aminopeptidase</keyword>
<keyword id="KW-0963">Cytoplasm</keyword>
<keyword id="KW-0378">Hydrolase</keyword>
<keyword id="KW-0479">Metal-binding</keyword>
<keyword id="KW-0482">Metalloprotease</keyword>
<keyword id="KW-0645">Protease</keyword>
<keyword id="KW-0862">Zinc</keyword>
<proteinExistence type="inferred from homology"/>
<dbReference type="EC" id="3.4.11.4" evidence="1"/>
<dbReference type="EMBL" id="CP001396">
    <property type="protein sequence ID" value="ACR63981.1"/>
    <property type="molecule type" value="Genomic_DNA"/>
</dbReference>
<dbReference type="RefSeq" id="WP_000359434.1">
    <property type="nucleotide sequence ID" value="NC_012759.1"/>
</dbReference>
<dbReference type="SMR" id="C4ZS67"/>
<dbReference type="MEROPS" id="M20.003"/>
<dbReference type="KEGG" id="ebw:BWG_0975"/>
<dbReference type="HOGENOM" id="CLU_053676_0_0_6"/>
<dbReference type="GO" id="GO:0005829">
    <property type="term" value="C:cytosol"/>
    <property type="evidence" value="ECO:0007669"/>
    <property type="project" value="TreeGrafter"/>
</dbReference>
<dbReference type="GO" id="GO:0008237">
    <property type="term" value="F:metallopeptidase activity"/>
    <property type="evidence" value="ECO:0007669"/>
    <property type="project" value="UniProtKB-KW"/>
</dbReference>
<dbReference type="GO" id="GO:0045148">
    <property type="term" value="F:tripeptide aminopeptidase activity"/>
    <property type="evidence" value="ECO:0007669"/>
    <property type="project" value="UniProtKB-UniRule"/>
</dbReference>
<dbReference type="GO" id="GO:0008270">
    <property type="term" value="F:zinc ion binding"/>
    <property type="evidence" value="ECO:0007669"/>
    <property type="project" value="UniProtKB-UniRule"/>
</dbReference>
<dbReference type="GO" id="GO:0043171">
    <property type="term" value="P:peptide catabolic process"/>
    <property type="evidence" value="ECO:0007669"/>
    <property type="project" value="UniProtKB-UniRule"/>
</dbReference>
<dbReference type="GO" id="GO:0006508">
    <property type="term" value="P:proteolysis"/>
    <property type="evidence" value="ECO:0007669"/>
    <property type="project" value="UniProtKB-UniRule"/>
</dbReference>
<dbReference type="CDD" id="cd03892">
    <property type="entry name" value="M20_peptT"/>
    <property type="match status" value="1"/>
</dbReference>
<dbReference type="FunFam" id="3.30.70.360:FF:000002">
    <property type="entry name" value="Peptidase T"/>
    <property type="match status" value="1"/>
</dbReference>
<dbReference type="Gene3D" id="3.30.70.360">
    <property type="match status" value="1"/>
</dbReference>
<dbReference type="Gene3D" id="3.40.630.10">
    <property type="entry name" value="Zn peptidases"/>
    <property type="match status" value="1"/>
</dbReference>
<dbReference type="HAMAP" id="MF_00550">
    <property type="entry name" value="Aminopeptidase_M20"/>
    <property type="match status" value="1"/>
</dbReference>
<dbReference type="InterPro" id="IPR001261">
    <property type="entry name" value="ArgE/DapE_CS"/>
</dbReference>
<dbReference type="InterPro" id="IPR036264">
    <property type="entry name" value="Bact_exopeptidase_dim_dom"/>
</dbReference>
<dbReference type="InterPro" id="IPR002933">
    <property type="entry name" value="Peptidase_M20"/>
</dbReference>
<dbReference type="InterPro" id="IPR011650">
    <property type="entry name" value="Peptidase_M20_dimer"/>
</dbReference>
<dbReference type="InterPro" id="IPR010161">
    <property type="entry name" value="Peptidase_M20B"/>
</dbReference>
<dbReference type="NCBIfam" id="TIGR01882">
    <property type="entry name" value="peptidase-T"/>
    <property type="match status" value="1"/>
</dbReference>
<dbReference type="NCBIfam" id="NF003976">
    <property type="entry name" value="PRK05469.1"/>
    <property type="match status" value="1"/>
</dbReference>
<dbReference type="NCBIfam" id="NF009920">
    <property type="entry name" value="PRK13381.1"/>
    <property type="match status" value="1"/>
</dbReference>
<dbReference type="PANTHER" id="PTHR42994">
    <property type="entry name" value="PEPTIDASE T"/>
    <property type="match status" value="1"/>
</dbReference>
<dbReference type="PANTHER" id="PTHR42994:SF1">
    <property type="entry name" value="PEPTIDASE T"/>
    <property type="match status" value="1"/>
</dbReference>
<dbReference type="Pfam" id="PF07687">
    <property type="entry name" value="M20_dimer"/>
    <property type="match status" value="1"/>
</dbReference>
<dbReference type="Pfam" id="PF01546">
    <property type="entry name" value="Peptidase_M20"/>
    <property type="match status" value="1"/>
</dbReference>
<dbReference type="PIRSF" id="PIRSF037215">
    <property type="entry name" value="Peptidase_M20B"/>
    <property type="match status" value="1"/>
</dbReference>
<dbReference type="SUPFAM" id="SSF55031">
    <property type="entry name" value="Bacterial exopeptidase dimerisation domain"/>
    <property type="match status" value="1"/>
</dbReference>
<dbReference type="SUPFAM" id="SSF53187">
    <property type="entry name" value="Zn-dependent exopeptidases"/>
    <property type="match status" value="1"/>
</dbReference>
<dbReference type="PROSITE" id="PS00758">
    <property type="entry name" value="ARGE_DAPE_CPG2_1"/>
    <property type="match status" value="1"/>
</dbReference>
<dbReference type="PROSITE" id="PS00759">
    <property type="entry name" value="ARGE_DAPE_CPG2_2"/>
    <property type="match status" value="1"/>
</dbReference>
<protein>
    <recommendedName>
        <fullName evidence="1">Peptidase T</fullName>
        <ecNumber evidence="1">3.4.11.4</ecNumber>
    </recommendedName>
    <alternativeName>
        <fullName evidence="1">Aminotripeptidase</fullName>
        <shortName evidence="1">Tripeptidase</shortName>
    </alternativeName>
    <alternativeName>
        <fullName evidence="1">Tripeptide aminopeptidase</fullName>
    </alternativeName>
</protein>
<feature type="chain" id="PRO_1000211990" description="Peptidase T">
    <location>
        <begin position="1"/>
        <end position="408"/>
    </location>
</feature>
<feature type="active site" evidence="1">
    <location>
        <position position="80"/>
    </location>
</feature>
<feature type="active site" description="Proton acceptor" evidence="1">
    <location>
        <position position="173"/>
    </location>
</feature>
<feature type="binding site" evidence="1">
    <location>
        <position position="78"/>
    </location>
    <ligand>
        <name>Zn(2+)</name>
        <dbReference type="ChEBI" id="CHEBI:29105"/>
        <label>1</label>
    </ligand>
</feature>
<feature type="binding site" evidence="1">
    <location>
        <position position="140"/>
    </location>
    <ligand>
        <name>Zn(2+)</name>
        <dbReference type="ChEBI" id="CHEBI:29105"/>
        <label>1</label>
    </ligand>
</feature>
<feature type="binding site" evidence="1">
    <location>
        <position position="140"/>
    </location>
    <ligand>
        <name>Zn(2+)</name>
        <dbReference type="ChEBI" id="CHEBI:29105"/>
        <label>2</label>
    </ligand>
</feature>
<feature type="binding site" evidence="1">
    <location>
        <position position="174"/>
    </location>
    <ligand>
        <name>Zn(2+)</name>
        <dbReference type="ChEBI" id="CHEBI:29105"/>
        <label>2</label>
    </ligand>
</feature>
<feature type="binding site" evidence="1">
    <location>
        <position position="196"/>
    </location>
    <ligand>
        <name>Zn(2+)</name>
        <dbReference type="ChEBI" id="CHEBI:29105"/>
        <label>1</label>
    </ligand>
</feature>
<feature type="binding site" evidence="1">
    <location>
        <position position="379"/>
    </location>
    <ligand>
        <name>Zn(2+)</name>
        <dbReference type="ChEBI" id="CHEBI:29105"/>
        <label>2</label>
    </ligand>
</feature>
<accession>C4ZS67</accession>
<sequence length="408" mass="44923">MDKLLERFLNYVSLDTQSKAGVRQVPSTEGQWKLLHLLKEQLEEMGLINVTLSEKGTLMATLPANVPGDIPAIGFISHVDTSPDCSGKNVNPQIVENYRGGDIALGIGDEVLSPVMFPVLHQLLGQTLITTDGKTLLGADDKAGIAEIMTALAVLQQKKIPHGDIRVAFTPDEEVGKGAKHFDVDAFDARWAYTVDGGGVGELEFENFNAASVNIKIVGNNVHPGTAKGVMVNALSLAARIHAEVPADESPEMTEGYEGFYHLASMKGTVERADMHYIIRDFDRKQFEARKRKMMEIAKKVGKGLHPDCYIELVIEDSYYNMREKVVEHPHILDIAQQAMRDCDIEPELKPIRGGTDGAQLSFMGLPCPNLFTGGYNYHGKHEFVTLEGMEKAVQVIVRIAELTAQRK</sequence>